<feature type="chain" id="PRO_1000053179" description="ATP synthase gamma chain">
    <location>
        <begin position="1"/>
        <end position="295"/>
    </location>
</feature>
<dbReference type="EMBL" id="CP000792">
    <property type="protein sequence ID" value="EAT97462.1"/>
    <property type="molecule type" value="Genomic_DNA"/>
</dbReference>
<dbReference type="RefSeq" id="WP_002939426.1">
    <property type="nucleotide sequence ID" value="NC_009802.2"/>
</dbReference>
<dbReference type="SMR" id="A7ZC36"/>
<dbReference type="STRING" id="360104.CCC13826_0916"/>
<dbReference type="GeneID" id="28662124"/>
<dbReference type="KEGG" id="cco:CCC13826_0916"/>
<dbReference type="eggNOG" id="COG0224">
    <property type="taxonomic scope" value="Bacteria"/>
</dbReference>
<dbReference type="HOGENOM" id="CLU_050669_0_1_7"/>
<dbReference type="OrthoDB" id="9812769at2"/>
<dbReference type="Proteomes" id="UP000001121">
    <property type="component" value="Chromosome"/>
</dbReference>
<dbReference type="GO" id="GO:0005886">
    <property type="term" value="C:plasma membrane"/>
    <property type="evidence" value="ECO:0007669"/>
    <property type="project" value="UniProtKB-SubCell"/>
</dbReference>
<dbReference type="GO" id="GO:0045259">
    <property type="term" value="C:proton-transporting ATP synthase complex"/>
    <property type="evidence" value="ECO:0007669"/>
    <property type="project" value="UniProtKB-KW"/>
</dbReference>
<dbReference type="GO" id="GO:0005524">
    <property type="term" value="F:ATP binding"/>
    <property type="evidence" value="ECO:0007669"/>
    <property type="project" value="UniProtKB-UniRule"/>
</dbReference>
<dbReference type="GO" id="GO:0046933">
    <property type="term" value="F:proton-transporting ATP synthase activity, rotational mechanism"/>
    <property type="evidence" value="ECO:0007669"/>
    <property type="project" value="UniProtKB-UniRule"/>
</dbReference>
<dbReference type="GO" id="GO:0042777">
    <property type="term" value="P:proton motive force-driven plasma membrane ATP synthesis"/>
    <property type="evidence" value="ECO:0007669"/>
    <property type="project" value="UniProtKB-UniRule"/>
</dbReference>
<dbReference type="CDD" id="cd12151">
    <property type="entry name" value="F1-ATPase_gamma"/>
    <property type="match status" value="1"/>
</dbReference>
<dbReference type="FunFam" id="1.10.287.80:FF:000007">
    <property type="entry name" value="ATP synthase gamma chain"/>
    <property type="match status" value="1"/>
</dbReference>
<dbReference type="FunFam" id="3.40.1380.10:FF:000006">
    <property type="entry name" value="ATP synthase gamma chain"/>
    <property type="match status" value="1"/>
</dbReference>
<dbReference type="Gene3D" id="3.40.1380.10">
    <property type="match status" value="1"/>
</dbReference>
<dbReference type="Gene3D" id="1.10.287.80">
    <property type="entry name" value="ATP synthase, gamma subunit, helix hairpin domain"/>
    <property type="match status" value="2"/>
</dbReference>
<dbReference type="HAMAP" id="MF_00815">
    <property type="entry name" value="ATP_synth_gamma_bact"/>
    <property type="match status" value="1"/>
</dbReference>
<dbReference type="InterPro" id="IPR035968">
    <property type="entry name" value="ATP_synth_F1_ATPase_gsu"/>
</dbReference>
<dbReference type="InterPro" id="IPR000131">
    <property type="entry name" value="ATP_synth_F1_gsu"/>
</dbReference>
<dbReference type="NCBIfam" id="TIGR01146">
    <property type="entry name" value="ATPsyn_F1gamma"/>
    <property type="match status" value="1"/>
</dbReference>
<dbReference type="PANTHER" id="PTHR11693">
    <property type="entry name" value="ATP SYNTHASE GAMMA CHAIN"/>
    <property type="match status" value="1"/>
</dbReference>
<dbReference type="PANTHER" id="PTHR11693:SF22">
    <property type="entry name" value="ATP SYNTHASE SUBUNIT GAMMA, MITOCHONDRIAL"/>
    <property type="match status" value="1"/>
</dbReference>
<dbReference type="Pfam" id="PF00231">
    <property type="entry name" value="ATP-synt"/>
    <property type="match status" value="1"/>
</dbReference>
<dbReference type="PRINTS" id="PR00126">
    <property type="entry name" value="ATPASEGAMMA"/>
</dbReference>
<dbReference type="SUPFAM" id="SSF52943">
    <property type="entry name" value="ATP synthase (F1-ATPase), gamma subunit"/>
    <property type="match status" value="1"/>
</dbReference>
<proteinExistence type="inferred from homology"/>
<accession>A7ZC36</accession>
<sequence>MSNLKDIKRKIKSVQNTQKTTRAMKLVSTAKLRKAEEAARYSRVYALKINEVLSEIAYKINQYASVMTESKFFNTTKSVEKVDIIFVTADKGLCGGFNVQTIKTVRRMIDELKAKKIKVRLRAVGKKGIEFFNFQGVELLETYVGASSSPTYEKAQKIIKDAIDDFTNGITDKVVLIHNGYKNMISQEIRVNDIVPIEPSKIVAVETNSLMEFEPEDNYTKIMDELLNKYFEYSMYYALVDSLAAEHSARMQAMDNATNNAKQRVKQLNLAYNKARQESITTELIEIISGVESMK</sequence>
<comment type="function">
    <text evidence="1">Produces ATP from ADP in the presence of a proton gradient across the membrane. The gamma chain is believed to be important in regulating ATPase activity and the flow of protons through the CF(0) complex.</text>
</comment>
<comment type="subunit">
    <text evidence="1">F-type ATPases have 2 components, CF(1) - the catalytic core - and CF(0) - the membrane proton channel. CF(1) has five subunits: alpha(3), beta(3), gamma(1), delta(1), epsilon(1). CF(0) has three main subunits: a, b and c.</text>
</comment>
<comment type="subcellular location">
    <subcellularLocation>
        <location evidence="1">Cell inner membrane</location>
        <topology evidence="1">Peripheral membrane protein</topology>
    </subcellularLocation>
</comment>
<comment type="similarity">
    <text evidence="1">Belongs to the ATPase gamma chain family.</text>
</comment>
<keyword id="KW-0066">ATP synthesis</keyword>
<keyword id="KW-0997">Cell inner membrane</keyword>
<keyword id="KW-1003">Cell membrane</keyword>
<keyword id="KW-0139">CF(1)</keyword>
<keyword id="KW-0375">Hydrogen ion transport</keyword>
<keyword id="KW-0406">Ion transport</keyword>
<keyword id="KW-0472">Membrane</keyword>
<keyword id="KW-0813">Transport</keyword>
<reference key="1">
    <citation type="submission" date="2007-10" db="EMBL/GenBank/DDBJ databases">
        <title>Genome sequence of Campylobacter concisus 13826 isolated from human feces.</title>
        <authorList>
            <person name="Fouts D.E."/>
            <person name="Mongodin E.F."/>
            <person name="Puiu D."/>
            <person name="Sebastian Y."/>
            <person name="Miller W.G."/>
            <person name="Mandrell R.E."/>
            <person name="On S."/>
            <person name="Nelson K.E."/>
        </authorList>
    </citation>
    <scope>NUCLEOTIDE SEQUENCE [LARGE SCALE GENOMIC DNA]</scope>
    <source>
        <strain>13826</strain>
    </source>
</reference>
<protein>
    <recommendedName>
        <fullName evidence="1">ATP synthase gamma chain</fullName>
    </recommendedName>
    <alternativeName>
        <fullName evidence="1">ATP synthase F1 sector gamma subunit</fullName>
    </alternativeName>
    <alternativeName>
        <fullName evidence="1">F-ATPase gamma subunit</fullName>
    </alternativeName>
</protein>
<name>ATPG_CAMC1</name>
<organism>
    <name type="scientific">Campylobacter concisus (strain 13826)</name>
    <dbReference type="NCBI Taxonomy" id="360104"/>
    <lineage>
        <taxon>Bacteria</taxon>
        <taxon>Pseudomonadati</taxon>
        <taxon>Campylobacterota</taxon>
        <taxon>Epsilonproteobacteria</taxon>
        <taxon>Campylobacterales</taxon>
        <taxon>Campylobacteraceae</taxon>
        <taxon>Campylobacter</taxon>
    </lineage>
</organism>
<evidence type="ECO:0000255" key="1">
    <source>
        <dbReference type="HAMAP-Rule" id="MF_00815"/>
    </source>
</evidence>
<gene>
    <name evidence="1" type="primary">atpG</name>
    <name type="ordered locus">Ccon26_04430</name>
    <name type="ORF">CCC13826_0916</name>
</gene>